<name>ATPD_PSEPF</name>
<dbReference type="EMBL" id="CP000094">
    <property type="protein sequence ID" value="ABA77466.1"/>
    <property type="molecule type" value="Genomic_DNA"/>
</dbReference>
<dbReference type="RefSeq" id="WP_011336717.1">
    <property type="nucleotide sequence ID" value="NC_007492.2"/>
</dbReference>
<dbReference type="SMR" id="Q3K438"/>
<dbReference type="KEGG" id="pfo:Pfl01_5733"/>
<dbReference type="eggNOG" id="COG0712">
    <property type="taxonomic scope" value="Bacteria"/>
</dbReference>
<dbReference type="HOGENOM" id="CLU_085114_3_0_6"/>
<dbReference type="Proteomes" id="UP000002704">
    <property type="component" value="Chromosome"/>
</dbReference>
<dbReference type="GO" id="GO:0005886">
    <property type="term" value="C:plasma membrane"/>
    <property type="evidence" value="ECO:0007669"/>
    <property type="project" value="UniProtKB-SubCell"/>
</dbReference>
<dbReference type="GO" id="GO:0045259">
    <property type="term" value="C:proton-transporting ATP synthase complex"/>
    <property type="evidence" value="ECO:0007669"/>
    <property type="project" value="UniProtKB-KW"/>
</dbReference>
<dbReference type="GO" id="GO:0046933">
    <property type="term" value="F:proton-transporting ATP synthase activity, rotational mechanism"/>
    <property type="evidence" value="ECO:0007669"/>
    <property type="project" value="UniProtKB-UniRule"/>
</dbReference>
<dbReference type="Gene3D" id="1.10.520.20">
    <property type="entry name" value="N-terminal domain of the delta subunit of the F1F0-ATP synthase"/>
    <property type="match status" value="1"/>
</dbReference>
<dbReference type="HAMAP" id="MF_01416">
    <property type="entry name" value="ATP_synth_delta_bact"/>
    <property type="match status" value="1"/>
</dbReference>
<dbReference type="InterPro" id="IPR026015">
    <property type="entry name" value="ATP_synth_OSCP/delta_N_sf"/>
</dbReference>
<dbReference type="InterPro" id="IPR000711">
    <property type="entry name" value="ATPase_OSCP/dsu"/>
</dbReference>
<dbReference type="NCBIfam" id="TIGR01145">
    <property type="entry name" value="ATP_synt_delta"/>
    <property type="match status" value="1"/>
</dbReference>
<dbReference type="NCBIfam" id="NF004402">
    <property type="entry name" value="PRK05758.2-2"/>
    <property type="match status" value="1"/>
</dbReference>
<dbReference type="PANTHER" id="PTHR11910">
    <property type="entry name" value="ATP SYNTHASE DELTA CHAIN"/>
    <property type="match status" value="1"/>
</dbReference>
<dbReference type="Pfam" id="PF00213">
    <property type="entry name" value="OSCP"/>
    <property type="match status" value="1"/>
</dbReference>
<dbReference type="PRINTS" id="PR00125">
    <property type="entry name" value="ATPASEDELTA"/>
</dbReference>
<dbReference type="SUPFAM" id="SSF47928">
    <property type="entry name" value="N-terminal domain of the delta subunit of the F1F0-ATP synthase"/>
    <property type="match status" value="1"/>
</dbReference>
<evidence type="ECO:0000255" key="1">
    <source>
        <dbReference type="HAMAP-Rule" id="MF_01416"/>
    </source>
</evidence>
<sequence length="178" mass="19349">MAELTTLARPYAKAAFEHAQAHQQLANWSAMLGLAAAVSQDDTMQRVLKAPRLTSAEKAATFIDVCGDKFDAKAQNFINVVAENDRLPLLPEIAALFDLYKAEQEKSVDVEVTSAFALNQEQQDKLAKVLSARLNREVRLQVEEDSSLIGGVVIRAGDLVIDGSIRGKIAKLAEALKS</sequence>
<proteinExistence type="inferred from homology"/>
<organism>
    <name type="scientific">Pseudomonas fluorescens (strain Pf0-1)</name>
    <dbReference type="NCBI Taxonomy" id="205922"/>
    <lineage>
        <taxon>Bacteria</taxon>
        <taxon>Pseudomonadati</taxon>
        <taxon>Pseudomonadota</taxon>
        <taxon>Gammaproteobacteria</taxon>
        <taxon>Pseudomonadales</taxon>
        <taxon>Pseudomonadaceae</taxon>
        <taxon>Pseudomonas</taxon>
    </lineage>
</organism>
<gene>
    <name evidence="1" type="primary">atpH</name>
    <name type="ordered locus">Pfl01_5733</name>
</gene>
<comment type="function">
    <text evidence="1">F(1)F(0) ATP synthase produces ATP from ADP in the presence of a proton or sodium gradient. F-type ATPases consist of two structural domains, F(1) containing the extramembraneous catalytic core and F(0) containing the membrane proton channel, linked together by a central stalk and a peripheral stalk. During catalysis, ATP synthesis in the catalytic domain of F(1) is coupled via a rotary mechanism of the central stalk subunits to proton translocation.</text>
</comment>
<comment type="function">
    <text evidence="1">This protein is part of the stalk that links CF(0) to CF(1). It either transmits conformational changes from CF(0) to CF(1) or is implicated in proton conduction.</text>
</comment>
<comment type="subunit">
    <text evidence="1">F-type ATPases have 2 components, F(1) - the catalytic core - and F(0) - the membrane proton channel. F(1) has five subunits: alpha(3), beta(3), gamma(1), delta(1), epsilon(1). F(0) has three main subunits: a(1), b(2) and c(10-14). The alpha and beta chains form an alternating ring which encloses part of the gamma chain. F(1) is attached to F(0) by a central stalk formed by the gamma and epsilon chains, while a peripheral stalk is formed by the delta and b chains.</text>
</comment>
<comment type="subcellular location">
    <subcellularLocation>
        <location evidence="1">Cell inner membrane</location>
        <topology evidence="1">Peripheral membrane protein</topology>
    </subcellularLocation>
</comment>
<comment type="similarity">
    <text evidence="1">Belongs to the ATPase delta chain family.</text>
</comment>
<accession>Q3K438</accession>
<reference key="1">
    <citation type="journal article" date="2009" name="Genome Biol.">
        <title>Genomic and genetic analyses of diversity and plant interactions of Pseudomonas fluorescens.</title>
        <authorList>
            <person name="Silby M.W."/>
            <person name="Cerdeno-Tarraga A.M."/>
            <person name="Vernikos G.S."/>
            <person name="Giddens S.R."/>
            <person name="Jackson R.W."/>
            <person name="Preston G.M."/>
            <person name="Zhang X.-X."/>
            <person name="Moon C.D."/>
            <person name="Gehrig S.M."/>
            <person name="Godfrey S.A.C."/>
            <person name="Knight C.G."/>
            <person name="Malone J.G."/>
            <person name="Robinson Z."/>
            <person name="Spiers A.J."/>
            <person name="Harris S."/>
            <person name="Challis G.L."/>
            <person name="Yaxley A.M."/>
            <person name="Harris D."/>
            <person name="Seeger K."/>
            <person name="Murphy L."/>
            <person name="Rutter S."/>
            <person name="Squares R."/>
            <person name="Quail M.A."/>
            <person name="Saunders E."/>
            <person name="Mavromatis K."/>
            <person name="Brettin T.S."/>
            <person name="Bentley S.D."/>
            <person name="Hothersall J."/>
            <person name="Stephens E."/>
            <person name="Thomas C.M."/>
            <person name="Parkhill J."/>
            <person name="Levy S.B."/>
            <person name="Rainey P.B."/>
            <person name="Thomson N.R."/>
        </authorList>
    </citation>
    <scope>NUCLEOTIDE SEQUENCE [LARGE SCALE GENOMIC DNA]</scope>
    <source>
        <strain>Pf0-1</strain>
    </source>
</reference>
<protein>
    <recommendedName>
        <fullName evidence="1">ATP synthase subunit delta</fullName>
    </recommendedName>
    <alternativeName>
        <fullName evidence="1">ATP synthase F(1) sector subunit delta</fullName>
    </alternativeName>
    <alternativeName>
        <fullName evidence="1">F-type ATPase subunit delta</fullName>
        <shortName evidence="1">F-ATPase subunit delta</shortName>
    </alternativeName>
</protein>
<keyword id="KW-0066">ATP synthesis</keyword>
<keyword id="KW-0997">Cell inner membrane</keyword>
<keyword id="KW-1003">Cell membrane</keyword>
<keyword id="KW-0139">CF(1)</keyword>
<keyword id="KW-0375">Hydrogen ion transport</keyword>
<keyword id="KW-0406">Ion transport</keyword>
<keyword id="KW-0472">Membrane</keyword>
<keyword id="KW-0813">Transport</keyword>
<feature type="chain" id="PRO_0000371072" description="ATP synthase subunit delta">
    <location>
        <begin position="1"/>
        <end position="178"/>
    </location>
</feature>